<evidence type="ECO:0000255" key="1">
    <source>
        <dbReference type="HAMAP-Rule" id="MF_00043"/>
    </source>
</evidence>
<reference key="1">
    <citation type="journal article" date="2009" name="J. Bacteriol.">
        <title>Complete genome sequence of the anaerobic, protein-degrading hyperthermophilic crenarchaeon Desulfurococcus kamchatkensis.</title>
        <authorList>
            <person name="Ravin N.V."/>
            <person name="Mardanov A.V."/>
            <person name="Beletsky A.V."/>
            <person name="Kublanov I.V."/>
            <person name="Kolganova T.V."/>
            <person name="Lebedinsky A.V."/>
            <person name="Chernyh N.A."/>
            <person name="Bonch-Osmolovskaya E.A."/>
            <person name="Skryabin K.G."/>
        </authorList>
    </citation>
    <scope>NUCLEOTIDE SEQUENCE [LARGE SCALE GENOMIC DNA]</scope>
    <source>
        <strain>DSM 18924 / JCM 16383 / VKM B-2413 / 1221n</strain>
    </source>
</reference>
<protein>
    <recommendedName>
        <fullName evidence="1">Elongation factor 1-beta</fullName>
        <shortName evidence="1">EF-1-beta</shortName>
    </recommendedName>
    <alternativeName>
        <fullName evidence="1">aEF-1beta</fullName>
    </alternativeName>
</protein>
<comment type="function">
    <text evidence="1">Promotes the exchange of GDP for GTP in EF-1-alpha/GDP, thus allowing the regeneration of EF-1-alpha/GTP that could then be used to form the ternary complex EF-1-alpha/GTP/AAtRNA.</text>
</comment>
<comment type="similarity">
    <text evidence="1">Belongs to the EF-1-beta/EF-1-delta family.</text>
</comment>
<keyword id="KW-0251">Elongation factor</keyword>
<keyword id="KW-0648">Protein biosynthesis</keyword>
<sequence>MAQVLVIVRVLPEDVETPLDELRKRIAGALPEGYELKMWDEEPIAFGLKALRLAIIMPEQTEGGTETLENLISQVQGVSQVEVEYVNRLS</sequence>
<name>EF1B_DESA1</name>
<accession>B8D5M3</accession>
<dbReference type="EMBL" id="CP001140">
    <property type="protein sequence ID" value="ACL11404.1"/>
    <property type="molecule type" value="Genomic_DNA"/>
</dbReference>
<dbReference type="RefSeq" id="WP_012608745.1">
    <property type="nucleotide sequence ID" value="NC_011766.1"/>
</dbReference>
<dbReference type="SMR" id="B8D5M3"/>
<dbReference type="STRING" id="490899.DKAM_1078"/>
<dbReference type="GeneID" id="7171182"/>
<dbReference type="KEGG" id="dka:DKAM_1078"/>
<dbReference type="eggNOG" id="arCOG01988">
    <property type="taxonomic scope" value="Archaea"/>
</dbReference>
<dbReference type="HOGENOM" id="CLU_165896_1_0_2"/>
<dbReference type="Proteomes" id="UP000006903">
    <property type="component" value="Chromosome"/>
</dbReference>
<dbReference type="GO" id="GO:0003746">
    <property type="term" value="F:translation elongation factor activity"/>
    <property type="evidence" value="ECO:0007669"/>
    <property type="project" value="UniProtKB-UniRule"/>
</dbReference>
<dbReference type="CDD" id="cd00292">
    <property type="entry name" value="EF1B"/>
    <property type="match status" value="1"/>
</dbReference>
<dbReference type="Gene3D" id="3.30.70.60">
    <property type="match status" value="1"/>
</dbReference>
<dbReference type="HAMAP" id="MF_00043">
    <property type="entry name" value="EF1_beta"/>
    <property type="match status" value="1"/>
</dbReference>
<dbReference type="InterPro" id="IPR036219">
    <property type="entry name" value="eEF-1beta-like_sf"/>
</dbReference>
<dbReference type="InterPro" id="IPR014038">
    <property type="entry name" value="EF1B_bsu/dsu_GNE"/>
</dbReference>
<dbReference type="InterPro" id="IPR014717">
    <property type="entry name" value="Transl_elong_EF1B/ribsomal_bS6"/>
</dbReference>
<dbReference type="InterPro" id="IPR004542">
    <property type="entry name" value="Transl_elong_EF1B_B_arc"/>
</dbReference>
<dbReference type="NCBIfam" id="TIGR00489">
    <property type="entry name" value="aEF-1_beta"/>
    <property type="match status" value="1"/>
</dbReference>
<dbReference type="NCBIfam" id="NF001670">
    <property type="entry name" value="PRK00435.1"/>
    <property type="match status" value="1"/>
</dbReference>
<dbReference type="PANTHER" id="PTHR39647">
    <property type="entry name" value="ELONGATION FACTOR 1-BETA"/>
    <property type="match status" value="1"/>
</dbReference>
<dbReference type="PANTHER" id="PTHR39647:SF1">
    <property type="entry name" value="ELONGATION FACTOR 1-BETA"/>
    <property type="match status" value="1"/>
</dbReference>
<dbReference type="Pfam" id="PF00736">
    <property type="entry name" value="EF1_GNE"/>
    <property type="match status" value="1"/>
</dbReference>
<dbReference type="PIRSF" id="PIRSF006521">
    <property type="entry name" value="Transl_elong_EF1B_B_arc"/>
    <property type="match status" value="1"/>
</dbReference>
<dbReference type="SMART" id="SM00888">
    <property type="entry name" value="EF1_GNE"/>
    <property type="match status" value="1"/>
</dbReference>
<dbReference type="SUPFAM" id="SSF54984">
    <property type="entry name" value="eEF-1beta-like"/>
    <property type="match status" value="1"/>
</dbReference>
<organism>
    <name type="scientific">Desulfurococcus amylolyticus (strain DSM 18924 / JCM 16383 / VKM B-2413 / 1221n)</name>
    <name type="common">Desulfurococcus kamchatkensis</name>
    <dbReference type="NCBI Taxonomy" id="490899"/>
    <lineage>
        <taxon>Archaea</taxon>
        <taxon>Thermoproteota</taxon>
        <taxon>Thermoprotei</taxon>
        <taxon>Desulfurococcales</taxon>
        <taxon>Desulfurococcaceae</taxon>
        <taxon>Desulfurococcus</taxon>
    </lineage>
</organism>
<proteinExistence type="inferred from homology"/>
<gene>
    <name evidence="1" type="primary">ef1b</name>
    <name type="ordered locus">DKAM_1078</name>
</gene>
<feature type="chain" id="PRO_1000117325" description="Elongation factor 1-beta">
    <location>
        <begin position="1"/>
        <end position="90"/>
    </location>
</feature>